<protein>
    <recommendedName>
        <fullName evidence="9">ATM interactor</fullName>
    </recommendedName>
    <alternativeName>
        <fullName evidence="2">ATM/ATR-substrate CHK2-interacting zinc finger protein</fullName>
        <shortName evidence="2">ASCIZ</shortName>
    </alternativeName>
</protein>
<gene>
    <name evidence="12" type="primary">Atmin</name>
    <name evidence="11" type="synonym">Kiaa0431</name>
</gene>
<accession>Q6P9S1</accession>
<accession>Q05CB1</accession>
<accession>Q80U05</accession>
<accession>Q8C311</accession>
<proteinExistence type="evidence at transcript level"/>
<evidence type="ECO:0000250" key="1"/>
<evidence type="ECO:0000250" key="2">
    <source>
        <dbReference type="UniProtKB" id="O43313"/>
    </source>
</evidence>
<evidence type="ECO:0000255" key="3"/>
<evidence type="ECO:0000256" key="4">
    <source>
        <dbReference type="SAM" id="MobiDB-lite"/>
    </source>
</evidence>
<evidence type="ECO:0000269" key="5">
    <source>
    </source>
</evidence>
<evidence type="ECO:0000269" key="6">
    <source>
    </source>
</evidence>
<evidence type="ECO:0000305" key="7"/>
<evidence type="ECO:0000312" key="8">
    <source>
        <dbReference type="EMBL" id="AAH27752.1"/>
    </source>
</evidence>
<evidence type="ECO:0000312" key="9">
    <source>
        <dbReference type="EMBL" id="AAH60631.1"/>
    </source>
</evidence>
<evidence type="ECO:0000312" key="10">
    <source>
        <dbReference type="EMBL" id="BAC39849.1"/>
    </source>
</evidence>
<evidence type="ECO:0000312" key="11">
    <source>
        <dbReference type="EMBL" id="BAC65563.1"/>
    </source>
</evidence>
<evidence type="ECO:0000312" key="12">
    <source>
        <dbReference type="MGI" id="MGI:2682328"/>
    </source>
</evidence>
<feature type="chain" id="PRO_0000355036" description="ATM interactor">
    <location>
        <begin position="1"/>
        <end position="818"/>
    </location>
</feature>
<feature type="zinc finger region" description="C2H2-type 1" evidence="3">
    <location>
        <begin position="80"/>
        <end position="105"/>
    </location>
</feature>
<feature type="zinc finger region" description="C2H2-type 2; degenerate" evidence="3">
    <location>
        <begin position="161"/>
        <end position="181"/>
    </location>
</feature>
<feature type="region of interest" description="Disordered" evidence="4">
    <location>
        <begin position="1"/>
        <end position="62"/>
    </location>
</feature>
<feature type="region of interest" description="Disordered" evidence="4">
    <location>
        <begin position="210"/>
        <end position="284"/>
    </location>
</feature>
<feature type="region of interest" description="Required for formation of RAD51 foci" evidence="1">
    <location>
        <begin position="219"/>
        <end position="437"/>
    </location>
</feature>
<feature type="region of interest" description="Disordered" evidence="4">
    <location>
        <begin position="603"/>
        <end position="625"/>
    </location>
</feature>
<feature type="compositionally biased region" description="Low complexity" evidence="4">
    <location>
        <begin position="1"/>
        <end position="34"/>
    </location>
</feature>
<feature type="compositionally biased region" description="Basic and acidic residues" evidence="4">
    <location>
        <begin position="210"/>
        <end position="221"/>
    </location>
</feature>
<feature type="compositionally biased region" description="Polar residues" evidence="4">
    <location>
        <begin position="229"/>
        <end position="243"/>
    </location>
</feature>
<feature type="compositionally biased region" description="Polar residues" evidence="4">
    <location>
        <begin position="603"/>
        <end position="612"/>
    </location>
</feature>
<feature type="sequence conflict" description="In Ref. 1." evidence="7" ref="1">
    <original>MAA</original>
    <variation>MGP</variation>
    <location>
        <begin position="1"/>
        <end position="3"/>
    </location>
</feature>
<feature type="sequence conflict" description="In Ref. 3; AAH27752." evidence="7" ref="3">
    <original>M</original>
    <variation>TRP</variation>
    <location>
        <position position="1"/>
    </location>
</feature>
<reference evidence="7" key="1">
    <citation type="journal article" date="2007" name="EMBO J.">
        <title>ATMIN defines an NBS1-independent pathway of ATM signalling.</title>
        <authorList>
            <person name="Kanu N."/>
            <person name="Behrens A."/>
        </authorList>
    </citation>
    <scope>NUCLEOTIDE SEQUENCE [MRNA]</scope>
    <source>
        <tissue evidence="5">Brain</tissue>
    </source>
</reference>
<reference key="2">
    <citation type="journal article" date="2009" name="PLoS Biol.">
        <title>Lineage-specific biology revealed by a finished genome assembly of the mouse.</title>
        <authorList>
            <person name="Church D.M."/>
            <person name="Goodstadt L."/>
            <person name="Hillier L.W."/>
            <person name="Zody M.C."/>
            <person name="Goldstein S."/>
            <person name="She X."/>
            <person name="Bult C.J."/>
            <person name="Agarwala R."/>
            <person name="Cherry J.L."/>
            <person name="DiCuccio M."/>
            <person name="Hlavina W."/>
            <person name="Kapustin Y."/>
            <person name="Meric P."/>
            <person name="Maglott D."/>
            <person name="Birtle Z."/>
            <person name="Marques A.C."/>
            <person name="Graves T."/>
            <person name="Zhou S."/>
            <person name="Teague B."/>
            <person name="Potamousis K."/>
            <person name="Churas C."/>
            <person name="Place M."/>
            <person name="Herschleb J."/>
            <person name="Runnheim R."/>
            <person name="Forrest D."/>
            <person name="Amos-Landgraf J."/>
            <person name="Schwartz D.C."/>
            <person name="Cheng Z."/>
            <person name="Lindblad-Toh K."/>
            <person name="Eichler E.E."/>
            <person name="Ponting C.P."/>
        </authorList>
    </citation>
    <scope>NUCLEOTIDE SEQUENCE [LARGE SCALE GENOMIC DNA]</scope>
</reference>
<reference evidence="7 9" key="3">
    <citation type="journal article" date="2004" name="Genome Res.">
        <title>The status, quality, and expansion of the NIH full-length cDNA project: the Mammalian Gene Collection (MGC).</title>
        <authorList>
            <consortium name="The MGC Project Team"/>
        </authorList>
    </citation>
    <scope>NUCLEOTIDE SEQUENCE [LARGE SCALE MRNA]</scope>
    <source>
        <strain evidence="9">C57BL/6J</strain>
        <tissue evidence="9">Brain</tissue>
        <tissue evidence="8">Mammary tumor</tissue>
    </source>
</reference>
<reference evidence="7 11" key="4">
    <citation type="journal article" date="2003" name="DNA Res.">
        <title>Prediction of the coding sequences of mouse homologues of KIAA gene: II. The complete nucleotide sequences of 400 mouse KIAA-homologous cDNAs identified by screening of terminal sequences of cDNA clones randomly sampled from size-fractionated libraries.</title>
        <authorList>
            <person name="Okazaki N."/>
            <person name="Kikuno R."/>
            <person name="Ohara R."/>
            <person name="Inamoto S."/>
            <person name="Aizawa H."/>
            <person name="Yuasa S."/>
            <person name="Nakajima D."/>
            <person name="Nagase T."/>
            <person name="Ohara O."/>
            <person name="Koga H."/>
        </authorList>
    </citation>
    <scope>NUCLEOTIDE SEQUENCE [LARGE SCALE MRNA] OF 29-818</scope>
    <source>
        <tissue evidence="11">Brain</tissue>
    </source>
</reference>
<reference evidence="7 10" key="5">
    <citation type="journal article" date="2005" name="Science">
        <title>The transcriptional landscape of the mammalian genome.</title>
        <authorList>
            <person name="Carninci P."/>
            <person name="Kasukawa T."/>
            <person name="Katayama S."/>
            <person name="Gough J."/>
            <person name="Frith M.C."/>
            <person name="Maeda N."/>
            <person name="Oyama R."/>
            <person name="Ravasi T."/>
            <person name="Lenhard B."/>
            <person name="Wells C."/>
            <person name="Kodzius R."/>
            <person name="Shimokawa K."/>
            <person name="Bajic V.B."/>
            <person name="Brenner S.E."/>
            <person name="Batalov S."/>
            <person name="Forrest A.R."/>
            <person name="Zavolan M."/>
            <person name="Davis M.J."/>
            <person name="Wilming L.G."/>
            <person name="Aidinis V."/>
            <person name="Allen J.E."/>
            <person name="Ambesi-Impiombato A."/>
            <person name="Apweiler R."/>
            <person name="Aturaliya R.N."/>
            <person name="Bailey T.L."/>
            <person name="Bansal M."/>
            <person name="Baxter L."/>
            <person name="Beisel K.W."/>
            <person name="Bersano T."/>
            <person name="Bono H."/>
            <person name="Chalk A.M."/>
            <person name="Chiu K.P."/>
            <person name="Choudhary V."/>
            <person name="Christoffels A."/>
            <person name="Clutterbuck D.R."/>
            <person name="Crowe M.L."/>
            <person name="Dalla E."/>
            <person name="Dalrymple B.P."/>
            <person name="de Bono B."/>
            <person name="Della Gatta G."/>
            <person name="di Bernardo D."/>
            <person name="Down T."/>
            <person name="Engstrom P."/>
            <person name="Fagiolini M."/>
            <person name="Faulkner G."/>
            <person name="Fletcher C.F."/>
            <person name="Fukushima T."/>
            <person name="Furuno M."/>
            <person name="Futaki S."/>
            <person name="Gariboldi M."/>
            <person name="Georgii-Hemming P."/>
            <person name="Gingeras T.R."/>
            <person name="Gojobori T."/>
            <person name="Green R.E."/>
            <person name="Gustincich S."/>
            <person name="Harbers M."/>
            <person name="Hayashi Y."/>
            <person name="Hensch T.K."/>
            <person name="Hirokawa N."/>
            <person name="Hill D."/>
            <person name="Huminiecki L."/>
            <person name="Iacono M."/>
            <person name="Ikeo K."/>
            <person name="Iwama A."/>
            <person name="Ishikawa T."/>
            <person name="Jakt M."/>
            <person name="Kanapin A."/>
            <person name="Katoh M."/>
            <person name="Kawasawa Y."/>
            <person name="Kelso J."/>
            <person name="Kitamura H."/>
            <person name="Kitano H."/>
            <person name="Kollias G."/>
            <person name="Krishnan S.P."/>
            <person name="Kruger A."/>
            <person name="Kummerfeld S.K."/>
            <person name="Kurochkin I.V."/>
            <person name="Lareau L.F."/>
            <person name="Lazarevic D."/>
            <person name="Lipovich L."/>
            <person name="Liu J."/>
            <person name="Liuni S."/>
            <person name="McWilliam S."/>
            <person name="Madan Babu M."/>
            <person name="Madera M."/>
            <person name="Marchionni L."/>
            <person name="Matsuda H."/>
            <person name="Matsuzawa S."/>
            <person name="Miki H."/>
            <person name="Mignone F."/>
            <person name="Miyake S."/>
            <person name="Morris K."/>
            <person name="Mottagui-Tabar S."/>
            <person name="Mulder N."/>
            <person name="Nakano N."/>
            <person name="Nakauchi H."/>
            <person name="Ng P."/>
            <person name="Nilsson R."/>
            <person name="Nishiguchi S."/>
            <person name="Nishikawa S."/>
            <person name="Nori F."/>
            <person name="Ohara O."/>
            <person name="Okazaki Y."/>
            <person name="Orlando V."/>
            <person name="Pang K.C."/>
            <person name="Pavan W.J."/>
            <person name="Pavesi G."/>
            <person name="Pesole G."/>
            <person name="Petrovsky N."/>
            <person name="Piazza S."/>
            <person name="Reed J."/>
            <person name="Reid J.F."/>
            <person name="Ring B.Z."/>
            <person name="Ringwald M."/>
            <person name="Rost B."/>
            <person name="Ruan Y."/>
            <person name="Salzberg S.L."/>
            <person name="Sandelin A."/>
            <person name="Schneider C."/>
            <person name="Schoenbach C."/>
            <person name="Sekiguchi K."/>
            <person name="Semple C.A."/>
            <person name="Seno S."/>
            <person name="Sessa L."/>
            <person name="Sheng Y."/>
            <person name="Shibata Y."/>
            <person name="Shimada H."/>
            <person name="Shimada K."/>
            <person name="Silva D."/>
            <person name="Sinclair B."/>
            <person name="Sperling S."/>
            <person name="Stupka E."/>
            <person name="Sugiura K."/>
            <person name="Sultana R."/>
            <person name="Takenaka Y."/>
            <person name="Taki K."/>
            <person name="Tammoja K."/>
            <person name="Tan S.L."/>
            <person name="Tang S."/>
            <person name="Taylor M.S."/>
            <person name="Tegner J."/>
            <person name="Teichmann S.A."/>
            <person name="Ueda H.R."/>
            <person name="van Nimwegen E."/>
            <person name="Verardo R."/>
            <person name="Wei C.L."/>
            <person name="Yagi K."/>
            <person name="Yamanishi H."/>
            <person name="Zabarovsky E."/>
            <person name="Zhu S."/>
            <person name="Zimmer A."/>
            <person name="Hide W."/>
            <person name="Bult C."/>
            <person name="Grimmond S.M."/>
            <person name="Teasdale R.D."/>
            <person name="Liu E.T."/>
            <person name="Brusic V."/>
            <person name="Quackenbush J."/>
            <person name="Wahlestedt C."/>
            <person name="Mattick J.S."/>
            <person name="Hume D.A."/>
            <person name="Kai C."/>
            <person name="Sasaki D."/>
            <person name="Tomaru Y."/>
            <person name="Fukuda S."/>
            <person name="Kanamori-Katayama M."/>
            <person name="Suzuki M."/>
            <person name="Aoki J."/>
            <person name="Arakawa T."/>
            <person name="Iida J."/>
            <person name="Imamura K."/>
            <person name="Itoh M."/>
            <person name="Kato T."/>
            <person name="Kawaji H."/>
            <person name="Kawagashira N."/>
            <person name="Kawashima T."/>
            <person name="Kojima M."/>
            <person name="Kondo S."/>
            <person name="Konno H."/>
            <person name="Nakano K."/>
            <person name="Ninomiya N."/>
            <person name="Nishio T."/>
            <person name="Okada M."/>
            <person name="Plessy C."/>
            <person name="Shibata K."/>
            <person name="Shiraki T."/>
            <person name="Suzuki S."/>
            <person name="Tagami M."/>
            <person name="Waki K."/>
            <person name="Watahiki A."/>
            <person name="Okamura-Oho Y."/>
            <person name="Suzuki H."/>
            <person name="Kawai J."/>
            <person name="Hayashizaki Y."/>
        </authorList>
    </citation>
    <scope>NUCLEOTIDE SEQUENCE [LARGE SCALE MRNA] OF 220-818</scope>
    <source>
        <strain evidence="10">C57BL/6J</strain>
        <tissue evidence="10">Lung</tissue>
    </source>
</reference>
<reference key="6">
    <citation type="journal article" date="2012" name="J. Biol. Chem.">
        <title>ATM substrate Chk2-interacting Zn2+ finger (ASCIZ) Is a bi-functional transcriptional activator and feedback sensor in the regulation of dynein light chain (DYNLL1) expression.</title>
        <authorList>
            <person name="Jurado S."/>
            <person name="Conlan L.A."/>
            <person name="Baker E.K."/>
            <person name="Ng J.L."/>
            <person name="Tenis N."/>
            <person name="Hoch N.C."/>
            <person name="Gleeson K."/>
            <person name="Smeets M."/>
            <person name="Izon D."/>
            <person name="Heierhorst J."/>
        </authorList>
    </citation>
    <scope>FUNCTION</scope>
</reference>
<name>ATMIN_MOUSE</name>
<organism>
    <name type="scientific">Mus musculus</name>
    <name type="common">Mouse</name>
    <dbReference type="NCBI Taxonomy" id="10090"/>
    <lineage>
        <taxon>Eukaryota</taxon>
        <taxon>Metazoa</taxon>
        <taxon>Chordata</taxon>
        <taxon>Craniata</taxon>
        <taxon>Vertebrata</taxon>
        <taxon>Euteleostomi</taxon>
        <taxon>Mammalia</taxon>
        <taxon>Eutheria</taxon>
        <taxon>Euarchontoglires</taxon>
        <taxon>Glires</taxon>
        <taxon>Rodentia</taxon>
        <taxon>Myomorpha</taxon>
        <taxon>Muroidea</taxon>
        <taxon>Muridae</taxon>
        <taxon>Murinae</taxon>
        <taxon>Mus</taxon>
        <taxon>Mus</taxon>
    </lineage>
</organism>
<keyword id="KW-0010">Activator</keyword>
<keyword id="KW-0227">DNA damage</keyword>
<keyword id="KW-0479">Metal-binding</keyword>
<keyword id="KW-0539">Nucleus</keyword>
<keyword id="KW-1185">Reference proteome</keyword>
<keyword id="KW-0677">Repeat</keyword>
<keyword id="KW-0804">Transcription</keyword>
<keyword id="KW-0805">Transcription regulation</keyword>
<keyword id="KW-0862">Zinc</keyword>
<keyword id="KW-0863">Zinc-finger</keyword>
<dbReference type="EMBL" id="AC162858">
    <property type="status" value="NOT_ANNOTATED_CDS"/>
    <property type="molecule type" value="Genomic_DNA"/>
</dbReference>
<dbReference type="EMBL" id="BC027752">
    <property type="protein sequence ID" value="AAH27752.1"/>
    <property type="status" value="ALT_SEQ"/>
    <property type="molecule type" value="mRNA"/>
</dbReference>
<dbReference type="EMBL" id="BC060631">
    <property type="protein sequence ID" value="AAH60631.1"/>
    <property type="status" value="ALT_INIT"/>
    <property type="molecule type" value="mRNA"/>
</dbReference>
<dbReference type="EMBL" id="AK122281">
    <property type="protein sequence ID" value="BAC65563.1"/>
    <property type="molecule type" value="mRNA"/>
</dbReference>
<dbReference type="EMBL" id="AK087334">
    <property type="protein sequence ID" value="BAC39849.1"/>
    <property type="status" value="ALT_FRAME"/>
    <property type="molecule type" value="mRNA"/>
</dbReference>
<dbReference type="CCDS" id="CCDS22694.2"/>
<dbReference type="RefSeq" id="NP_808368.3">
    <property type="nucleotide sequence ID" value="NM_177700.4"/>
</dbReference>
<dbReference type="BioGRID" id="231577">
    <property type="interactions" value="1"/>
</dbReference>
<dbReference type="FunCoup" id="Q6P9S1">
    <property type="interactions" value="3847"/>
</dbReference>
<dbReference type="STRING" id="10090.ENSMUSP00000104727"/>
<dbReference type="GlyGen" id="Q6P9S1">
    <property type="glycosylation" value="2 sites"/>
</dbReference>
<dbReference type="iPTMnet" id="Q6P9S1"/>
<dbReference type="PhosphoSitePlus" id="Q6P9S1"/>
<dbReference type="PaxDb" id="10090-ENSMUSP00000104727"/>
<dbReference type="ProteomicsDB" id="277070"/>
<dbReference type="Antibodypedia" id="30434">
    <property type="antibodies" value="140 antibodies from 25 providers"/>
</dbReference>
<dbReference type="DNASU" id="234776"/>
<dbReference type="Ensembl" id="ENSMUST00000109099.4">
    <property type="protein sequence ID" value="ENSMUSP00000104727.4"/>
    <property type="gene ID" value="ENSMUSG00000047388.11"/>
</dbReference>
<dbReference type="GeneID" id="234776"/>
<dbReference type="KEGG" id="mmu:234776"/>
<dbReference type="UCSC" id="uc009nop.2">
    <property type="organism name" value="mouse"/>
</dbReference>
<dbReference type="AGR" id="MGI:2682328"/>
<dbReference type="CTD" id="23300"/>
<dbReference type="MGI" id="MGI:2682328">
    <property type="gene designation" value="Atmin"/>
</dbReference>
<dbReference type="VEuPathDB" id="HostDB:ENSMUSG00000047388"/>
<dbReference type="eggNOG" id="KOG1721">
    <property type="taxonomic scope" value="Eukaryota"/>
</dbReference>
<dbReference type="GeneTree" id="ENSGT00390000013091"/>
<dbReference type="HOGENOM" id="CLU_023902_0_0_1"/>
<dbReference type="InParanoid" id="Q6P9S1"/>
<dbReference type="OMA" id="LCALFQH"/>
<dbReference type="OrthoDB" id="6354171at2759"/>
<dbReference type="PhylomeDB" id="Q6P9S1"/>
<dbReference type="TreeFam" id="TF331171"/>
<dbReference type="BioGRID-ORCS" id="234776">
    <property type="hits" value="11 hits in 77 CRISPR screens"/>
</dbReference>
<dbReference type="ChiTaRS" id="Atmin">
    <property type="organism name" value="mouse"/>
</dbReference>
<dbReference type="PRO" id="PR:Q6P9S1"/>
<dbReference type="Proteomes" id="UP000000589">
    <property type="component" value="Chromosome 8"/>
</dbReference>
<dbReference type="RNAct" id="Q6P9S1">
    <property type="molecule type" value="protein"/>
</dbReference>
<dbReference type="Bgee" id="ENSMUSG00000047388">
    <property type="expression patterns" value="Expressed in animal zygote and 247 other cell types or tissues"/>
</dbReference>
<dbReference type="GO" id="GO:0016604">
    <property type="term" value="C:nuclear body"/>
    <property type="evidence" value="ECO:0007669"/>
    <property type="project" value="Ensembl"/>
</dbReference>
<dbReference type="GO" id="GO:0001228">
    <property type="term" value="F:DNA-binding transcription activator activity, RNA polymerase II-specific"/>
    <property type="evidence" value="ECO:0000314"/>
    <property type="project" value="ARUK-UCL"/>
</dbReference>
<dbReference type="GO" id="GO:0070840">
    <property type="term" value="F:dynein complex binding"/>
    <property type="evidence" value="ECO:0007669"/>
    <property type="project" value="Ensembl"/>
</dbReference>
<dbReference type="GO" id="GO:0000976">
    <property type="term" value="F:transcription cis-regulatory region binding"/>
    <property type="evidence" value="ECO:0000314"/>
    <property type="project" value="UniProtKB"/>
</dbReference>
<dbReference type="GO" id="GO:0008270">
    <property type="term" value="F:zinc ion binding"/>
    <property type="evidence" value="ECO:0007669"/>
    <property type="project" value="UniProtKB-KW"/>
</dbReference>
<dbReference type="GO" id="GO:0006974">
    <property type="term" value="P:DNA damage response"/>
    <property type="evidence" value="ECO:0007669"/>
    <property type="project" value="UniProtKB-KW"/>
</dbReference>
<dbReference type="GO" id="GO:0044458">
    <property type="term" value="P:motile cilium assembly"/>
    <property type="evidence" value="ECO:0000315"/>
    <property type="project" value="MGI"/>
</dbReference>
<dbReference type="GO" id="GO:0045893">
    <property type="term" value="P:positive regulation of DNA-templated transcription"/>
    <property type="evidence" value="ECO:0000315"/>
    <property type="project" value="UniProtKB"/>
</dbReference>
<dbReference type="GO" id="GO:0010628">
    <property type="term" value="P:positive regulation of gene expression"/>
    <property type="evidence" value="ECO:0000314"/>
    <property type="project" value="MGI"/>
</dbReference>
<dbReference type="GO" id="GO:1902857">
    <property type="term" value="P:positive regulation of non-motile cilium assembly"/>
    <property type="evidence" value="ECO:0000315"/>
    <property type="project" value="MGI"/>
</dbReference>
<dbReference type="GO" id="GO:0045944">
    <property type="term" value="P:positive regulation of transcription by RNA polymerase II"/>
    <property type="evidence" value="ECO:0000314"/>
    <property type="project" value="ARUK-UCL"/>
</dbReference>
<dbReference type="Gene3D" id="3.30.160.60">
    <property type="entry name" value="Classic Zinc Finger"/>
    <property type="match status" value="1"/>
</dbReference>
<dbReference type="InterPro" id="IPR055303">
    <property type="entry name" value="ATMIN"/>
</dbReference>
<dbReference type="InterPro" id="IPR056545">
    <property type="entry name" value="C2H2_ASCIZ_1st_2nd"/>
</dbReference>
<dbReference type="InterPro" id="IPR056380">
    <property type="entry name" value="Znf_C2H2_ASCIZ_4th"/>
</dbReference>
<dbReference type="InterPro" id="IPR013087">
    <property type="entry name" value="Znf_C2H2_type"/>
</dbReference>
<dbReference type="InterPro" id="IPR056381">
    <property type="entry name" value="Znf_C2HC_ASCIZ_3rd"/>
</dbReference>
<dbReference type="PANTHER" id="PTHR46664">
    <property type="entry name" value="ATM INTERACTOR"/>
    <property type="match status" value="1"/>
</dbReference>
<dbReference type="PANTHER" id="PTHR46664:SF1">
    <property type="entry name" value="ATM INTERACTOR"/>
    <property type="match status" value="1"/>
</dbReference>
<dbReference type="Pfam" id="PF24757">
    <property type="entry name" value="C2H2_ASCIZ"/>
    <property type="match status" value="2"/>
</dbReference>
<dbReference type="Pfam" id="PF24761">
    <property type="entry name" value="C2H2_ASCIZ_4th"/>
    <property type="match status" value="1"/>
</dbReference>
<dbReference type="Pfam" id="PF24759">
    <property type="entry name" value="C2HC_ASCIZ"/>
    <property type="match status" value="1"/>
</dbReference>
<dbReference type="SMART" id="SM00355">
    <property type="entry name" value="ZnF_C2H2"/>
    <property type="match status" value="4"/>
</dbReference>
<dbReference type="PROSITE" id="PS00028">
    <property type="entry name" value="ZINC_FINGER_C2H2_1"/>
    <property type="match status" value="1"/>
</dbReference>
<comment type="function">
    <text evidence="1 6">Transcription factor. Plays a crucial role in cell survival and RAD51 foci formation in response to methylating DNA damage. Involved in regulating the activity of ATM in the absence of DNA damage. May play a role in stabilizing ATM (By similarity). Binds to the DYNLL1 promoter and activates its transcription.</text>
</comment>
<comment type="subunit">
    <text evidence="1">Interacts via its C-terminus with ATM. Interacts with DYNLL; this interaction inhibits ATMIN transcriptional activity and hence may play a role in a feedback loop whereby DYNLL1 inhibits transactivation of its own promoter by ATMIN. ATMIN.</text>
</comment>
<comment type="subcellular location">
    <subcellularLocation>
        <location evidence="2">Nucleus</location>
    </subcellularLocation>
    <text evidence="2">Nuclear, in discrete foci during G1 phase.</text>
</comment>
<comment type="sequence caution" evidence="7">
    <conflict type="miscellaneous discrepancy">
        <sequence resource="EMBL-CDS" id="AAH27752"/>
    </conflict>
    <text>Contaminating sequence. Potential poly-A sequence.</text>
</comment>
<comment type="sequence caution" evidence="7">
    <conflict type="erroneous initiation">
        <sequence resource="EMBL-CDS" id="AAH60631"/>
    </conflict>
    <text>Truncated N-terminus.</text>
</comment>
<comment type="sequence caution" evidence="7">
    <conflict type="frameshift">
        <sequence resource="EMBL-CDS" id="BAC39849"/>
    </conflict>
</comment>
<sequence>MAATEAAAADSAGPAPGVPATPASTRGAAAASSPWRPPESRLQGSRPRPARARAAAPVPPARELIQPTVSELSRAVRTNILCTVRGCGKILPNSPALNMHLVKSHRLQDGIVNPTIRKDLTTAPKFYCCPIKGCPRGPDRPFSQFSLVKQHFMKMHAEKKHKCSKCSNSYGTEWDLKRHEEDCGKTFQCTCGCPYASRTALQSHIYRTGHEIPAEHRDPPSKKRKMESYLQNQKLSSKTTEPLSDQAAPRQDAAEPDAPEVKPAASLEDSCSAHTKKQSVATPPRCPQKLLLPKPKVALVKLPVMQFSPVPVFVPTAESSAQPVVLGVDHSSAAGTVHLVPLSVGALILSLDSEACSLKESLPLSKIISPVVEPMNTGVQVNLGKSLCSPLQEVGSVCQRTSISSSNVQTDLTYASANLIPSAQWLGPDSSVSSCSQTDLSFDSQVSLPVSVHTQTLVPSSKVTSSIAAQTDAFIDACFQPGGVSRETQTSRMQNRTNDSVPVGHTGLCGDIFESVHASYSVPTDTIMSSSLVAETGTHGLPPQSDPKILGQVMEKSAPVLNFSTQNGLLPAHTMTDNQTQTIDLLSDLENILSSNLPGQTLDNRSLLSDTNPGPDAQLPAGSAQNSGIDFDIEEFLSASNIQTQTEESELSSMSTEPVLESLDIETQTDVLLSDPSTQPYGFRAGSGFLGLEMFDTQTQTDLNFFLDSSPHLPLGSILKHSSFSMSTDSSDTETQTEGACPARHLPALESKVQLSSTETQTMSSGFEPLGNLFLTSNETQTAMDDFLLADLAWNTMESQFSSVETQTCAELHAVSSF</sequence>